<proteinExistence type="inferred from homology"/>
<accession>Q04520</accession>
<organism>
    <name type="scientific">Raoultella terrigena</name>
    <name type="common">Klebsiella terrigena</name>
    <dbReference type="NCBI Taxonomy" id="577"/>
    <lineage>
        <taxon>Bacteria</taxon>
        <taxon>Pseudomonadati</taxon>
        <taxon>Pseudomonadota</taxon>
        <taxon>Gammaproteobacteria</taxon>
        <taxon>Enterobacterales</taxon>
        <taxon>Enterobacteriaceae</taxon>
        <taxon>Klebsiella/Raoultella group</taxon>
        <taxon>Raoultella</taxon>
    </lineage>
</organism>
<evidence type="ECO:0000250" key="1"/>
<evidence type="ECO:0000255" key="2">
    <source>
        <dbReference type="PROSITE-ProRule" id="PRU10001"/>
    </source>
</evidence>
<evidence type="ECO:0000305" key="3"/>
<dbReference type="EC" id="1.1.1.304"/>
<dbReference type="EMBL" id="L04507">
    <property type="protein sequence ID" value="AAA25056.1"/>
    <property type="molecule type" value="Genomic_DNA"/>
</dbReference>
<dbReference type="PIR" id="E47069">
    <property type="entry name" value="E47069"/>
</dbReference>
<dbReference type="SMR" id="Q04520"/>
<dbReference type="GO" id="GO:0052588">
    <property type="term" value="F:diacetyl reductase ((S)-acetoin forming) (NAD+) activity"/>
    <property type="evidence" value="ECO:0007669"/>
    <property type="project" value="UniProtKB-EC"/>
</dbReference>
<dbReference type="GO" id="GO:0045150">
    <property type="term" value="P:acetoin catabolic process"/>
    <property type="evidence" value="ECO:0007669"/>
    <property type="project" value="InterPro"/>
</dbReference>
<dbReference type="FunFam" id="3.40.50.720:FF:000084">
    <property type="entry name" value="Short-chain dehydrogenase reductase"/>
    <property type="match status" value="1"/>
</dbReference>
<dbReference type="Gene3D" id="3.40.50.720">
    <property type="entry name" value="NAD(P)-binding Rossmann-like Domain"/>
    <property type="match status" value="1"/>
</dbReference>
<dbReference type="InterPro" id="IPR014007">
    <property type="entry name" value="23BDH"/>
</dbReference>
<dbReference type="InterPro" id="IPR036291">
    <property type="entry name" value="NAD(P)-bd_dom_sf"/>
</dbReference>
<dbReference type="InterPro" id="IPR020904">
    <property type="entry name" value="Sc_DH/Rdtase_CS"/>
</dbReference>
<dbReference type="InterPro" id="IPR002347">
    <property type="entry name" value="SDR_fam"/>
</dbReference>
<dbReference type="NCBIfam" id="TIGR02415">
    <property type="entry name" value="23BDH"/>
    <property type="match status" value="1"/>
</dbReference>
<dbReference type="PANTHER" id="PTHR43669">
    <property type="entry name" value="5-KETO-D-GLUCONATE 5-REDUCTASE"/>
    <property type="match status" value="1"/>
</dbReference>
<dbReference type="PANTHER" id="PTHR43669:SF3">
    <property type="entry name" value="ALCOHOL DEHYDROGENASE, PUTATIVE (AFU_ORTHOLOGUE AFUA_3G03445)-RELATED"/>
    <property type="match status" value="1"/>
</dbReference>
<dbReference type="Pfam" id="PF00106">
    <property type="entry name" value="adh_short"/>
    <property type="match status" value="1"/>
</dbReference>
<dbReference type="PRINTS" id="PR00081">
    <property type="entry name" value="GDHRDH"/>
</dbReference>
<dbReference type="PRINTS" id="PR00080">
    <property type="entry name" value="SDRFAMILY"/>
</dbReference>
<dbReference type="SMART" id="SM00822">
    <property type="entry name" value="PKS_KR"/>
    <property type="match status" value="1"/>
</dbReference>
<dbReference type="SUPFAM" id="SSF51735">
    <property type="entry name" value="NAD(P)-binding Rossmann-fold domains"/>
    <property type="match status" value="1"/>
</dbReference>
<dbReference type="PROSITE" id="PS00061">
    <property type="entry name" value="ADH_SHORT"/>
    <property type="match status" value="1"/>
</dbReference>
<protein>
    <recommendedName>
        <fullName>Diacetyl reductase [(S)-acetoin forming]</fullName>
        <ecNumber>1.1.1.304</ecNumber>
    </recommendedName>
    <alternativeName>
        <fullName>Acetoin(diacetyl) reductase</fullName>
        <shortName>AR</shortName>
    </alternativeName>
    <alternativeName>
        <fullName>Meso-2,3-butanediol dehydrogenase</fullName>
    </alternativeName>
</protein>
<reference key="1">
    <citation type="journal article" date="1993" name="J. Bacteriol.">
        <title>Characterization of the genes of the 2,3-butanediol operons from Klebsiella terrigena and Enterobacter aerogenes.</title>
        <authorList>
            <person name="Blomqvist K."/>
            <person name="Nikkola M."/>
            <person name="Lehtovaara P."/>
            <person name="Suihko M.-L."/>
            <person name="Airaksinen U."/>
            <person name="Straby K.B."/>
            <person name="Knowles J.K.C."/>
            <person name="Penttilae M.E."/>
        </authorList>
    </citation>
    <scope>NUCLEOTIDE SEQUENCE [GENOMIC DNA]</scope>
    <source>
        <strain>VTT-E-74023</strain>
    </source>
</reference>
<gene>
    <name type="primary">budC</name>
</gene>
<feature type="chain" id="PRO_0000054538" description="Diacetyl reductase [(S)-acetoin forming]">
    <location>
        <begin position="1"/>
        <end position="241"/>
    </location>
</feature>
<feature type="active site" description="Proton acceptor" evidence="2">
    <location>
        <position position="152"/>
    </location>
</feature>
<feature type="active site" evidence="1">
    <location>
        <position position="156"/>
    </location>
</feature>
<feature type="binding site" evidence="1">
    <location>
        <begin position="6"/>
        <end position="30"/>
    </location>
    <ligand>
        <name>NAD(+)</name>
        <dbReference type="ChEBI" id="CHEBI:57540"/>
    </ligand>
</feature>
<feature type="binding site" evidence="1">
    <location>
        <position position="139"/>
    </location>
    <ligand>
        <name>substrate</name>
    </ligand>
</feature>
<comment type="function">
    <text>Catalyzes the irreversible reduction of 2,3-butanediol to (S)-acetoin in the presence of NADH.</text>
</comment>
<comment type="catalytic activity">
    <reaction>
        <text>(S)-acetoin + NAD(+) = diacetyl + NADH + H(+)</text>
        <dbReference type="Rhea" id="RHEA:27286"/>
        <dbReference type="ChEBI" id="CHEBI:15378"/>
        <dbReference type="ChEBI" id="CHEBI:15687"/>
        <dbReference type="ChEBI" id="CHEBI:16583"/>
        <dbReference type="ChEBI" id="CHEBI:57540"/>
        <dbReference type="ChEBI" id="CHEBI:57945"/>
        <dbReference type="EC" id="1.1.1.304"/>
    </reaction>
</comment>
<comment type="subunit">
    <text>Homotetramer.</text>
</comment>
<comment type="similarity">
    <text evidence="3">Belongs to the short-chain dehydrogenases/reductases (SDR) family.</text>
</comment>
<keyword id="KW-0520">NAD</keyword>
<keyword id="KW-0560">Oxidoreductase</keyword>
<sequence length="241" mass="25313">MQKVALVTGAGQGIGKAIALRLVKDGFAVAIADYNDATATAVAAEINQAGGRAVAIKVDVSRRDQVFAAVEQARKALGGFNVIVNNAGIAPSTPIESITEEIVDRVYNINVKGVIWGMQAAVEAFKKEGHGGKIVNACSQAGHVGNPELAVYSSSKFAVRGLTQTAARDLAPLGITVNGFCPGIVKTPMWAEIDRQCRKRRANRWATARLNLPNASPLAACRSLKTSPPACRSSPARIPTI</sequence>
<name>BUDC_RAOTE</name>